<reference key="1">
    <citation type="journal article" date="1996" name="Science">
        <title>Complete genome sequence of the methanogenic archaeon, Methanococcus jannaschii.</title>
        <authorList>
            <person name="Bult C.J."/>
            <person name="White O."/>
            <person name="Olsen G.J."/>
            <person name="Zhou L."/>
            <person name="Fleischmann R.D."/>
            <person name="Sutton G.G."/>
            <person name="Blake J.A."/>
            <person name="FitzGerald L.M."/>
            <person name="Clayton R.A."/>
            <person name="Gocayne J.D."/>
            <person name="Kerlavage A.R."/>
            <person name="Dougherty B.A."/>
            <person name="Tomb J.-F."/>
            <person name="Adams M.D."/>
            <person name="Reich C.I."/>
            <person name="Overbeek R."/>
            <person name="Kirkness E.F."/>
            <person name="Weinstock K.G."/>
            <person name="Merrick J.M."/>
            <person name="Glodek A."/>
            <person name="Scott J.L."/>
            <person name="Geoghagen N.S.M."/>
            <person name="Weidman J.F."/>
            <person name="Fuhrmann J.L."/>
            <person name="Nguyen D."/>
            <person name="Utterback T.R."/>
            <person name="Kelley J.M."/>
            <person name="Peterson J.D."/>
            <person name="Sadow P.W."/>
            <person name="Hanna M.C."/>
            <person name="Cotton M.D."/>
            <person name="Roberts K.M."/>
            <person name="Hurst M.A."/>
            <person name="Kaine B.P."/>
            <person name="Borodovsky M."/>
            <person name="Klenk H.-P."/>
            <person name="Fraser C.M."/>
            <person name="Smith H.O."/>
            <person name="Woese C.R."/>
            <person name="Venter J.C."/>
        </authorList>
    </citation>
    <scope>NUCLEOTIDE SEQUENCE [LARGE SCALE GENOMIC DNA]</scope>
    <source>
        <strain>ATCC 43067 / DSM 2661 / JAL-1 / JCM 10045 / NBRC 100440</strain>
    </source>
</reference>
<accession>P54009</accession>
<gene>
    <name type="primary">rpl31e</name>
    <name type="ordered locus">MJ0049</name>
</gene>
<proteinExistence type="inferred from homology"/>
<feature type="chain" id="PRO_0000153794" description="Large ribosomal subunit protein eL31">
    <location>
        <begin position="1"/>
        <end position="87"/>
    </location>
</feature>
<comment type="similarity">
    <text evidence="1">Belongs to the eukaryotic ribosomal protein eL31 family.</text>
</comment>
<keyword id="KW-1185">Reference proteome</keyword>
<keyword id="KW-0687">Ribonucleoprotein</keyword>
<keyword id="KW-0689">Ribosomal protein</keyword>
<sequence length="87" mass="10205">MEVLMMEERIYTIPLRDVINKSVRTKRAPRAIKKIKQFLKRHMKAEIVKIDNELNEKIWERGIQKPPARVRVKAVKEGNVVIATLAE</sequence>
<name>RL31_METJA</name>
<dbReference type="EMBL" id="L77117">
    <property type="protein sequence ID" value="AAB98030.1"/>
    <property type="molecule type" value="Genomic_DNA"/>
</dbReference>
<dbReference type="PIR" id="A64306">
    <property type="entry name" value="A64306"/>
</dbReference>
<dbReference type="SMR" id="P54009"/>
<dbReference type="FunCoup" id="P54009">
    <property type="interactions" value="147"/>
</dbReference>
<dbReference type="STRING" id="243232.MJ_0049"/>
<dbReference type="PaxDb" id="243232-MJ_0049"/>
<dbReference type="EnsemblBacteria" id="AAB98030">
    <property type="protein sequence ID" value="AAB98030"/>
    <property type="gene ID" value="MJ_0049"/>
</dbReference>
<dbReference type="KEGG" id="mja:MJ_0049"/>
<dbReference type="eggNOG" id="arCOG04473">
    <property type="taxonomic scope" value="Archaea"/>
</dbReference>
<dbReference type="HOGENOM" id="CLU_112570_3_2_2"/>
<dbReference type="InParanoid" id="P54009"/>
<dbReference type="PhylomeDB" id="P54009"/>
<dbReference type="Proteomes" id="UP000000805">
    <property type="component" value="Chromosome"/>
</dbReference>
<dbReference type="GO" id="GO:0022625">
    <property type="term" value="C:cytosolic large ribosomal subunit"/>
    <property type="evidence" value="ECO:0000318"/>
    <property type="project" value="GO_Central"/>
</dbReference>
<dbReference type="GO" id="GO:0003735">
    <property type="term" value="F:structural constituent of ribosome"/>
    <property type="evidence" value="ECO:0000318"/>
    <property type="project" value="GO_Central"/>
</dbReference>
<dbReference type="GO" id="GO:0002181">
    <property type="term" value="P:cytoplasmic translation"/>
    <property type="evidence" value="ECO:0000318"/>
    <property type="project" value="GO_Central"/>
</dbReference>
<dbReference type="CDD" id="cd00463">
    <property type="entry name" value="Ribosomal_L31e"/>
    <property type="match status" value="1"/>
</dbReference>
<dbReference type="Gene3D" id="3.10.440.10">
    <property type="match status" value="1"/>
</dbReference>
<dbReference type="HAMAP" id="MF_00410">
    <property type="entry name" value="Ribosomal_eL31"/>
    <property type="match status" value="1"/>
</dbReference>
<dbReference type="InterPro" id="IPR000054">
    <property type="entry name" value="Ribosomal_eL31"/>
</dbReference>
<dbReference type="InterPro" id="IPR020052">
    <property type="entry name" value="Ribosomal_eL31_CS"/>
</dbReference>
<dbReference type="InterPro" id="IPR023621">
    <property type="entry name" value="Ribosomal_eL31_dom_sf"/>
</dbReference>
<dbReference type="NCBIfam" id="NF002258">
    <property type="entry name" value="PRK01192.1-1"/>
    <property type="match status" value="1"/>
</dbReference>
<dbReference type="PANTHER" id="PTHR10956">
    <property type="entry name" value="60S RIBOSOMAL PROTEIN L31"/>
    <property type="match status" value="1"/>
</dbReference>
<dbReference type="PANTHER" id="PTHR10956:SF0">
    <property type="entry name" value="60S RIBOSOMAL PROTEIN L31"/>
    <property type="match status" value="1"/>
</dbReference>
<dbReference type="Pfam" id="PF01198">
    <property type="entry name" value="Ribosomal_L31e"/>
    <property type="match status" value="1"/>
</dbReference>
<dbReference type="SMART" id="SM01380">
    <property type="entry name" value="Ribosomal_L31e"/>
    <property type="match status" value="1"/>
</dbReference>
<dbReference type="SUPFAM" id="SSF54575">
    <property type="entry name" value="Ribosomal protein L31e"/>
    <property type="match status" value="1"/>
</dbReference>
<dbReference type="PROSITE" id="PS01144">
    <property type="entry name" value="RIBOSOMAL_L31E"/>
    <property type="match status" value="1"/>
</dbReference>
<protein>
    <recommendedName>
        <fullName evidence="1">Large ribosomal subunit protein eL31</fullName>
    </recommendedName>
    <alternativeName>
        <fullName>50S ribosomal protein L31e</fullName>
    </alternativeName>
</protein>
<evidence type="ECO:0000305" key="1"/>
<organism>
    <name type="scientific">Methanocaldococcus jannaschii (strain ATCC 43067 / DSM 2661 / JAL-1 / JCM 10045 / NBRC 100440)</name>
    <name type="common">Methanococcus jannaschii</name>
    <dbReference type="NCBI Taxonomy" id="243232"/>
    <lineage>
        <taxon>Archaea</taxon>
        <taxon>Methanobacteriati</taxon>
        <taxon>Methanobacteriota</taxon>
        <taxon>Methanomada group</taxon>
        <taxon>Methanococci</taxon>
        <taxon>Methanococcales</taxon>
        <taxon>Methanocaldococcaceae</taxon>
        <taxon>Methanocaldococcus</taxon>
    </lineage>
</organism>